<accession>Q88MG0</accession>
<keyword id="KW-0963">Cytoplasm</keyword>
<keyword id="KW-0448">Lipopolysaccharide biosynthesis</keyword>
<keyword id="KW-1185">Reference proteome</keyword>
<keyword id="KW-0808">Transferase</keyword>
<reference key="1">
    <citation type="journal article" date="2002" name="Environ. Microbiol.">
        <title>Complete genome sequence and comparative analysis of the metabolically versatile Pseudomonas putida KT2440.</title>
        <authorList>
            <person name="Nelson K.E."/>
            <person name="Weinel C."/>
            <person name="Paulsen I.T."/>
            <person name="Dodson R.J."/>
            <person name="Hilbert H."/>
            <person name="Martins dos Santos V.A.P."/>
            <person name="Fouts D.E."/>
            <person name="Gill S.R."/>
            <person name="Pop M."/>
            <person name="Holmes M."/>
            <person name="Brinkac L.M."/>
            <person name="Beanan M.J."/>
            <person name="DeBoy R.T."/>
            <person name="Daugherty S.C."/>
            <person name="Kolonay J.F."/>
            <person name="Madupu R."/>
            <person name="Nelson W.C."/>
            <person name="White O."/>
            <person name="Peterson J.D."/>
            <person name="Khouri H.M."/>
            <person name="Hance I."/>
            <person name="Chris Lee P."/>
            <person name="Holtzapple E.K."/>
            <person name="Scanlan D."/>
            <person name="Tran K."/>
            <person name="Moazzez A."/>
            <person name="Utterback T.R."/>
            <person name="Rizzo M."/>
            <person name="Lee K."/>
            <person name="Kosack D."/>
            <person name="Moestl D."/>
            <person name="Wedler H."/>
            <person name="Lauber J."/>
            <person name="Stjepandic D."/>
            <person name="Hoheisel J."/>
            <person name="Straetz M."/>
            <person name="Heim S."/>
            <person name="Kiewitz C."/>
            <person name="Eisen J.A."/>
            <person name="Timmis K.N."/>
            <person name="Duesterhoeft A."/>
            <person name="Tuemmler B."/>
            <person name="Fraser C.M."/>
        </authorList>
    </citation>
    <scope>NUCLEOTIDE SEQUENCE [LARGE SCALE GENOMIC DNA]</scope>
    <source>
        <strain>ATCC 47054 / DSM 6125 / CFBP 8728 / NCIMB 11950 / KT2440</strain>
    </source>
</reference>
<comment type="catalytic activity">
    <reaction>
        <text>D-arabinose 5-phosphate + phosphoenolpyruvate + H2O = 3-deoxy-alpha-D-manno-2-octulosonate-8-phosphate + phosphate</text>
        <dbReference type="Rhea" id="RHEA:14053"/>
        <dbReference type="ChEBI" id="CHEBI:15377"/>
        <dbReference type="ChEBI" id="CHEBI:43474"/>
        <dbReference type="ChEBI" id="CHEBI:57693"/>
        <dbReference type="ChEBI" id="CHEBI:58702"/>
        <dbReference type="ChEBI" id="CHEBI:85985"/>
        <dbReference type="EC" id="2.5.1.55"/>
    </reaction>
</comment>
<comment type="pathway">
    <text>Carbohydrate biosynthesis; 3-deoxy-D-manno-octulosonate biosynthesis; 3-deoxy-D-manno-octulosonate from D-ribulose 5-phosphate: step 2/3.</text>
</comment>
<comment type="pathway">
    <text>Bacterial outer membrane biogenesis; lipopolysaccharide biosynthesis.</text>
</comment>
<comment type="subcellular location">
    <subcellularLocation>
        <location evidence="1">Cytoplasm</location>
    </subcellularLocation>
</comment>
<comment type="similarity">
    <text evidence="2">Belongs to the KdsA family.</text>
</comment>
<dbReference type="EC" id="2.5.1.55"/>
<dbReference type="EMBL" id="AE015451">
    <property type="protein sequence ID" value="AAN67232.1"/>
    <property type="molecule type" value="Genomic_DNA"/>
</dbReference>
<dbReference type="RefSeq" id="NP_743768.1">
    <property type="nucleotide sequence ID" value="NC_002947.4"/>
</dbReference>
<dbReference type="SMR" id="Q88MG0"/>
<dbReference type="STRING" id="160488.PP_1611"/>
<dbReference type="PaxDb" id="160488-PP_1611"/>
<dbReference type="KEGG" id="ppu:PP_1611"/>
<dbReference type="PATRIC" id="fig|160488.4.peg.1702"/>
<dbReference type="eggNOG" id="COG2877">
    <property type="taxonomic scope" value="Bacteria"/>
</dbReference>
<dbReference type="HOGENOM" id="CLU_036666_0_0_6"/>
<dbReference type="OrthoDB" id="9776934at2"/>
<dbReference type="PhylomeDB" id="Q88MG0"/>
<dbReference type="BioCyc" id="PPUT160488:G1G01-1708-MONOMER"/>
<dbReference type="UniPathway" id="UPA00030"/>
<dbReference type="UniPathway" id="UPA00357">
    <property type="reaction ID" value="UER00474"/>
</dbReference>
<dbReference type="Proteomes" id="UP000000556">
    <property type="component" value="Chromosome"/>
</dbReference>
<dbReference type="GO" id="GO:0005737">
    <property type="term" value="C:cytoplasm"/>
    <property type="evidence" value="ECO:0007669"/>
    <property type="project" value="UniProtKB-SubCell"/>
</dbReference>
<dbReference type="GO" id="GO:0008676">
    <property type="term" value="F:3-deoxy-8-phosphooctulonate synthase activity"/>
    <property type="evidence" value="ECO:0007669"/>
    <property type="project" value="UniProtKB-UniRule"/>
</dbReference>
<dbReference type="GO" id="GO:0019294">
    <property type="term" value="P:keto-3-deoxy-D-manno-octulosonic acid biosynthetic process"/>
    <property type="evidence" value="ECO:0007669"/>
    <property type="project" value="UniProtKB-UniRule"/>
</dbReference>
<dbReference type="FunFam" id="3.20.20.70:FF:000058">
    <property type="entry name" value="2-dehydro-3-deoxyphosphooctonate aldolase"/>
    <property type="match status" value="1"/>
</dbReference>
<dbReference type="Gene3D" id="3.20.20.70">
    <property type="entry name" value="Aldolase class I"/>
    <property type="match status" value="1"/>
</dbReference>
<dbReference type="HAMAP" id="MF_00056">
    <property type="entry name" value="KDO8P_synth"/>
    <property type="match status" value="1"/>
</dbReference>
<dbReference type="InterPro" id="IPR013785">
    <property type="entry name" value="Aldolase_TIM"/>
</dbReference>
<dbReference type="InterPro" id="IPR006218">
    <property type="entry name" value="DAHP1/KDSA"/>
</dbReference>
<dbReference type="InterPro" id="IPR006269">
    <property type="entry name" value="KDO8P_synthase"/>
</dbReference>
<dbReference type="NCBIfam" id="TIGR01362">
    <property type="entry name" value="KDO8P_synth"/>
    <property type="match status" value="1"/>
</dbReference>
<dbReference type="NCBIfam" id="NF003543">
    <property type="entry name" value="PRK05198.1"/>
    <property type="match status" value="1"/>
</dbReference>
<dbReference type="NCBIfam" id="NF009109">
    <property type="entry name" value="PRK12457.1"/>
    <property type="match status" value="1"/>
</dbReference>
<dbReference type="PANTHER" id="PTHR21057">
    <property type="entry name" value="PHOSPHO-2-DEHYDRO-3-DEOXYHEPTONATE ALDOLASE"/>
    <property type="match status" value="1"/>
</dbReference>
<dbReference type="Pfam" id="PF00793">
    <property type="entry name" value="DAHP_synth_1"/>
    <property type="match status" value="1"/>
</dbReference>
<dbReference type="SUPFAM" id="SSF51569">
    <property type="entry name" value="Aldolase"/>
    <property type="match status" value="1"/>
</dbReference>
<proteinExistence type="inferred from homology"/>
<gene>
    <name type="primary">kdsA1</name>
    <name type="synonym">kdsA-1</name>
    <name type="ordered locus">PP_1611</name>
</gene>
<protein>
    <recommendedName>
        <fullName>2-dehydro-3-deoxyphosphooctonate aldolase 1</fullName>
        <ecNumber>2.5.1.55</ecNumber>
    </recommendedName>
    <alternativeName>
        <fullName>3-deoxy-D-manno-octulosonic acid 8-phosphate synthase 1</fullName>
    </alternativeName>
    <alternativeName>
        <fullName>KDO-8-phosphate synthase 1</fullName>
        <shortName>KDO 8-P synthase 1</shortName>
        <shortName>KDOPS 1</shortName>
    </alternativeName>
    <alternativeName>
        <fullName>Phospho-2-dehydro-3-deoxyoctonate aldolase 1</fullName>
    </alternativeName>
</protein>
<feature type="chain" id="PRO_0000187151" description="2-dehydro-3-deoxyphosphooctonate aldolase 1">
    <location>
        <begin position="1"/>
        <end position="281"/>
    </location>
</feature>
<evidence type="ECO:0000250" key="1"/>
<evidence type="ECO:0000305" key="2"/>
<name>KDSA1_PSEPK</name>
<sequence length="281" mass="31034">MTQKIIRVGNIEIANDKPFVLFGGMNVLESRDLAMKVCEEYVRVTEKLGIPYVFKASFDKANRSSVTSYRGPGMEEGLKIFEEIKRTFNVPVITDVHEPYQAEPVAKVCDIIQLPAFLSRQTDLVVAMAKTGVVINIKKAQFLAPQEMKHILAKCEEAGNDQLILCERGSSFGYNNLVVDMLGFGIMKQFEYPVFFDVTHALQMPGGRADSAGGRRAQVTDLAKAGMSQGLAGLFLEAHPDPDNAKCDGPCALRLDKLEPFLVQLKQLDDLVKSFPTVETA</sequence>
<organism>
    <name type="scientific">Pseudomonas putida (strain ATCC 47054 / DSM 6125 / CFBP 8728 / NCIMB 11950 / KT2440)</name>
    <dbReference type="NCBI Taxonomy" id="160488"/>
    <lineage>
        <taxon>Bacteria</taxon>
        <taxon>Pseudomonadati</taxon>
        <taxon>Pseudomonadota</taxon>
        <taxon>Gammaproteobacteria</taxon>
        <taxon>Pseudomonadales</taxon>
        <taxon>Pseudomonadaceae</taxon>
        <taxon>Pseudomonas</taxon>
    </lineage>
</organism>